<comment type="alternative products">
    <event type="alternative splicing"/>
    <isoform>
        <id>Q6DI92-1</id>
        <name>1</name>
        <sequence type="displayed"/>
    </isoform>
    <isoform>
        <id>Q6DI92-2</id>
        <name>2</name>
        <sequence type="described" ref="VSP_031965"/>
    </isoform>
    <isoform>
        <id>Q6DI92-3</id>
        <name>3</name>
        <sequence type="described" ref="VSP_031966 VSP_031967 VSP_031968"/>
    </isoform>
    <isoform>
        <id>Q6DI92-4</id>
        <name>4</name>
        <sequence type="described" ref="VSP_031969 VSP_031970"/>
    </isoform>
</comment>
<comment type="sequence caution" evidence="2">
    <conflict type="frameshift">
        <sequence resource="EMBL-CDS" id="AAH75681"/>
    </conflict>
</comment>
<comment type="sequence caution" evidence="2">
    <conflict type="frameshift">
        <sequence resource="EMBL-CDS" id="BAB31091"/>
    </conflict>
</comment>
<comment type="sequence caution" evidence="2">
    <conflict type="frameshift">
        <sequence resource="EMBL-CDS" id="BAE35600"/>
    </conflict>
</comment>
<dbReference type="EMBL" id="AK018141">
    <property type="protein sequence ID" value="BAB31091.1"/>
    <property type="status" value="ALT_FRAME"/>
    <property type="molecule type" value="mRNA"/>
</dbReference>
<dbReference type="EMBL" id="AK132923">
    <property type="protein sequence ID" value="BAE21424.1"/>
    <property type="molecule type" value="mRNA"/>
</dbReference>
<dbReference type="EMBL" id="AK160064">
    <property type="protein sequence ID" value="BAE35600.1"/>
    <property type="status" value="ALT_FRAME"/>
    <property type="molecule type" value="mRNA"/>
</dbReference>
<dbReference type="EMBL" id="AK162673">
    <property type="protein sequence ID" value="BAE37016.1"/>
    <property type="molecule type" value="mRNA"/>
</dbReference>
<dbReference type="EMBL" id="BC075681">
    <property type="protein sequence ID" value="AAH75681.1"/>
    <property type="status" value="ALT_FRAME"/>
    <property type="molecule type" value="mRNA"/>
</dbReference>
<dbReference type="RefSeq" id="NP_796286.2">
    <property type="nucleotide sequence ID" value="NM_177312.4"/>
</dbReference>
<dbReference type="FunCoup" id="Q6DI92">
    <property type="interactions" value="22"/>
</dbReference>
<dbReference type="STRING" id="10090.ENSMUSP00000104172"/>
<dbReference type="GlyGen" id="Q6DI92">
    <property type="glycosylation" value="1 site"/>
</dbReference>
<dbReference type="PhosphoSitePlus" id="Q6DI92"/>
<dbReference type="PaxDb" id="10090-ENSMUSP00000104172"/>
<dbReference type="ProteomicsDB" id="275163">
    <molecule id="Q6DI92-1"/>
</dbReference>
<dbReference type="ProteomicsDB" id="275164">
    <molecule id="Q6DI92-2"/>
</dbReference>
<dbReference type="Antibodypedia" id="68326">
    <property type="antibodies" value="14 antibodies from 7 providers"/>
</dbReference>
<dbReference type="DNASU" id="321008"/>
<dbReference type="GeneID" id="321008"/>
<dbReference type="KEGG" id="mmu:321008"/>
<dbReference type="UCSC" id="uc009ffk.1">
    <molecule id="Q6DI92-1"/>
    <property type="organism name" value="mouse"/>
</dbReference>
<dbReference type="UCSC" id="uc009ffm.1">
    <molecule id="Q6DI92-4"/>
    <property type="organism name" value="mouse"/>
</dbReference>
<dbReference type="UCSC" id="uc009ffn.1">
    <molecule id="Q6DI92-3"/>
    <property type="organism name" value="mouse"/>
</dbReference>
<dbReference type="AGR" id="MGI:2447816"/>
<dbReference type="CTD" id="374920"/>
<dbReference type="MGI" id="MGI:2447816">
    <property type="gene designation" value="Zswim9"/>
</dbReference>
<dbReference type="VEuPathDB" id="HostDB:ENSMUSG00000070814"/>
<dbReference type="eggNOG" id="ENOG502QUUY">
    <property type="taxonomic scope" value="Eukaryota"/>
</dbReference>
<dbReference type="HOGENOM" id="CLU_038227_0_0_1"/>
<dbReference type="InParanoid" id="Q6DI92"/>
<dbReference type="OrthoDB" id="9898241at2759"/>
<dbReference type="PhylomeDB" id="Q6DI92"/>
<dbReference type="TreeFam" id="TF337793"/>
<dbReference type="BioGRID-ORCS" id="321008">
    <property type="hits" value="4 hits in 38 CRISPR screens"/>
</dbReference>
<dbReference type="PRO" id="PR:Q6DI92"/>
<dbReference type="Proteomes" id="UP000000589">
    <property type="component" value="Chromosome 7"/>
</dbReference>
<dbReference type="RNAct" id="Q6DI92">
    <property type="molecule type" value="protein"/>
</dbReference>
<dbReference type="ExpressionAtlas" id="Q6DI92">
    <property type="expression patterns" value="baseline and differential"/>
</dbReference>
<dbReference type="GO" id="GO:0002244">
    <property type="term" value="P:hematopoietic progenitor cell differentiation"/>
    <property type="evidence" value="ECO:0000316"/>
    <property type="project" value="MGI"/>
</dbReference>
<dbReference type="InterPro" id="IPR049218">
    <property type="entry name" value="DUF5575_C"/>
</dbReference>
<dbReference type="InterPro" id="IPR049217">
    <property type="entry name" value="DUF5575_N"/>
</dbReference>
<dbReference type="InterPro" id="IPR040854">
    <property type="entry name" value="ZSWIM9"/>
</dbReference>
<dbReference type="InterPro" id="IPR048315">
    <property type="entry name" value="ZSWIM9_RNaseH-like"/>
</dbReference>
<dbReference type="PANTHER" id="PTHR47086">
    <property type="entry name" value="BTB DOMAIN-CONTAINING PROTEIN"/>
    <property type="match status" value="1"/>
</dbReference>
<dbReference type="PANTHER" id="PTHR47086:SF1">
    <property type="entry name" value="ZINC FINGER SWIM-TYPE CONTAINING 9"/>
    <property type="match status" value="1"/>
</dbReference>
<dbReference type="Pfam" id="PF17738">
    <property type="entry name" value="DUF5575"/>
    <property type="match status" value="1"/>
</dbReference>
<dbReference type="Pfam" id="PF20784">
    <property type="entry name" value="DUF5575_C"/>
    <property type="match status" value="1"/>
</dbReference>
<dbReference type="Pfam" id="PF20783">
    <property type="entry name" value="DUF5575_N"/>
    <property type="match status" value="1"/>
</dbReference>
<accession>Q6DI92</accession>
<accession>Q3TRL3</accession>
<accession>Q3V0S9</accession>
<accession>Q9D3B2</accession>
<name>ZSWM9_MOUSE</name>
<protein>
    <recommendedName>
        <fullName>Uncharacterized protein ZSWIM9</fullName>
    </recommendedName>
</protein>
<gene>
    <name evidence="3" type="primary">Zswim9</name>
</gene>
<reference key="1">
    <citation type="journal article" date="2005" name="Science">
        <title>The transcriptional landscape of the mammalian genome.</title>
        <authorList>
            <person name="Carninci P."/>
            <person name="Kasukawa T."/>
            <person name="Katayama S."/>
            <person name="Gough J."/>
            <person name="Frith M.C."/>
            <person name="Maeda N."/>
            <person name="Oyama R."/>
            <person name="Ravasi T."/>
            <person name="Lenhard B."/>
            <person name="Wells C."/>
            <person name="Kodzius R."/>
            <person name="Shimokawa K."/>
            <person name="Bajic V.B."/>
            <person name="Brenner S.E."/>
            <person name="Batalov S."/>
            <person name="Forrest A.R."/>
            <person name="Zavolan M."/>
            <person name="Davis M.J."/>
            <person name="Wilming L.G."/>
            <person name="Aidinis V."/>
            <person name="Allen J.E."/>
            <person name="Ambesi-Impiombato A."/>
            <person name="Apweiler R."/>
            <person name="Aturaliya R.N."/>
            <person name="Bailey T.L."/>
            <person name="Bansal M."/>
            <person name="Baxter L."/>
            <person name="Beisel K.W."/>
            <person name="Bersano T."/>
            <person name="Bono H."/>
            <person name="Chalk A.M."/>
            <person name="Chiu K.P."/>
            <person name="Choudhary V."/>
            <person name="Christoffels A."/>
            <person name="Clutterbuck D.R."/>
            <person name="Crowe M.L."/>
            <person name="Dalla E."/>
            <person name="Dalrymple B.P."/>
            <person name="de Bono B."/>
            <person name="Della Gatta G."/>
            <person name="di Bernardo D."/>
            <person name="Down T."/>
            <person name="Engstrom P."/>
            <person name="Fagiolini M."/>
            <person name="Faulkner G."/>
            <person name="Fletcher C.F."/>
            <person name="Fukushima T."/>
            <person name="Furuno M."/>
            <person name="Futaki S."/>
            <person name="Gariboldi M."/>
            <person name="Georgii-Hemming P."/>
            <person name="Gingeras T.R."/>
            <person name="Gojobori T."/>
            <person name="Green R.E."/>
            <person name="Gustincich S."/>
            <person name="Harbers M."/>
            <person name="Hayashi Y."/>
            <person name="Hensch T.K."/>
            <person name="Hirokawa N."/>
            <person name="Hill D."/>
            <person name="Huminiecki L."/>
            <person name="Iacono M."/>
            <person name="Ikeo K."/>
            <person name="Iwama A."/>
            <person name="Ishikawa T."/>
            <person name="Jakt M."/>
            <person name="Kanapin A."/>
            <person name="Katoh M."/>
            <person name="Kawasawa Y."/>
            <person name="Kelso J."/>
            <person name="Kitamura H."/>
            <person name="Kitano H."/>
            <person name="Kollias G."/>
            <person name="Krishnan S.P."/>
            <person name="Kruger A."/>
            <person name="Kummerfeld S.K."/>
            <person name="Kurochkin I.V."/>
            <person name="Lareau L.F."/>
            <person name="Lazarevic D."/>
            <person name="Lipovich L."/>
            <person name="Liu J."/>
            <person name="Liuni S."/>
            <person name="McWilliam S."/>
            <person name="Madan Babu M."/>
            <person name="Madera M."/>
            <person name="Marchionni L."/>
            <person name="Matsuda H."/>
            <person name="Matsuzawa S."/>
            <person name="Miki H."/>
            <person name="Mignone F."/>
            <person name="Miyake S."/>
            <person name="Morris K."/>
            <person name="Mottagui-Tabar S."/>
            <person name="Mulder N."/>
            <person name="Nakano N."/>
            <person name="Nakauchi H."/>
            <person name="Ng P."/>
            <person name="Nilsson R."/>
            <person name="Nishiguchi S."/>
            <person name="Nishikawa S."/>
            <person name="Nori F."/>
            <person name="Ohara O."/>
            <person name="Okazaki Y."/>
            <person name="Orlando V."/>
            <person name="Pang K.C."/>
            <person name="Pavan W.J."/>
            <person name="Pavesi G."/>
            <person name="Pesole G."/>
            <person name="Petrovsky N."/>
            <person name="Piazza S."/>
            <person name="Reed J."/>
            <person name="Reid J.F."/>
            <person name="Ring B.Z."/>
            <person name="Ringwald M."/>
            <person name="Rost B."/>
            <person name="Ruan Y."/>
            <person name="Salzberg S.L."/>
            <person name="Sandelin A."/>
            <person name="Schneider C."/>
            <person name="Schoenbach C."/>
            <person name="Sekiguchi K."/>
            <person name="Semple C.A."/>
            <person name="Seno S."/>
            <person name="Sessa L."/>
            <person name="Sheng Y."/>
            <person name="Shibata Y."/>
            <person name="Shimada H."/>
            <person name="Shimada K."/>
            <person name="Silva D."/>
            <person name="Sinclair B."/>
            <person name="Sperling S."/>
            <person name="Stupka E."/>
            <person name="Sugiura K."/>
            <person name="Sultana R."/>
            <person name="Takenaka Y."/>
            <person name="Taki K."/>
            <person name="Tammoja K."/>
            <person name="Tan S.L."/>
            <person name="Tang S."/>
            <person name="Taylor M.S."/>
            <person name="Tegner J."/>
            <person name="Teichmann S.A."/>
            <person name="Ueda H.R."/>
            <person name="van Nimwegen E."/>
            <person name="Verardo R."/>
            <person name="Wei C.L."/>
            <person name="Yagi K."/>
            <person name="Yamanishi H."/>
            <person name="Zabarovsky E."/>
            <person name="Zhu S."/>
            <person name="Zimmer A."/>
            <person name="Hide W."/>
            <person name="Bult C."/>
            <person name="Grimmond S.M."/>
            <person name="Teasdale R.D."/>
            <person name="Liu E.T."/>
            <person name="Brusic V."/>
            <person name="Quackenbush J."/>
            <person name="Wahlestedt C."/>
            <person name="Mattick J.S."/>
            <person name="Hume D.A."/>
            <person name="Kai C."/>
            <person name="Sasaki D."/>
            <person name="Tomaru Y."/>
            <person name="Fukuda S."/>
            <person name="Kanamori-Katayama M."/>
            <person name="Suzuki M."/>
            <person name="Aoki J."/>
            <person name="Arakawa T."/>
            <person name="Iida J."/>
            <person name="Imamura K."/>
            <person name="Itoh M."/>
            <person name="Kato T."/>
            <person name="Kawaji H."/>
            <person name="Kawagashira N."/>
            <person name="Kawashima T."/>
            <person name="Kojima M."/>
            <person name="Kondo S."/>
            <person name="Konno H."/>
            <person name="Nakano K."/>
            <person name="Ninomiya N."/>
            <person name="Nishio T."/>
            <person name="Okada M."/>
            <person name="Plessy C."/>
            <person name="Shibata K."/>
            <person name="Shiraki T."/>
            <person name="Suzuki S."/>
            <person name="Tagami M."/>
            <person name="Waki K."/>
            <person name="Watahiki A."/>
            <person name="Okamura-Oho Y."/>
            <person name="Suzuki H."/>
            <person name="Kawai J."/>
            <person name="Hayashizaki Y."/>
        </authorList>
    </citation>
    <scope>NUCLEOTIDE SEQUENCE [LARGE SCALE MRNA] (ISOFORMS 1; 2; 3 AND 4)</scope>
    <source>
        <strain>C57BL/6J</strain>
        <tissue>Bone</tissue>
        <tissue>Medulla oblongata</tissue>
        <tissue>Testis</tissue>
    </source>
</reference>
<reference key="2">
    <citation type="journal article" date="2004" name="Genome Res.">
        <title>The status, quality, and expansion of the NIH full-length cDNA project: the Mammalian Gene Collection (MGC).</title>
        <authorList>
            <consortium name="The MGC Project Team"/>
        </authorList>
    </citation>
    <scope>NUCLEOTIDE SEQUENCE [LARGE SCALE MRNA] (ISOFORM 1)</scope>
    <source>
        <strain>C57BL/6J</strain>
        <tissue>Eye</tissue>
    </source>
</reference>
<keyword id="KW-0025">Alternative splicing</keyword>
<keyword id="KW-1185">Reference proteome</keyword>
<sequence>MELTEPLPSAAVQKEEQELLDRTFFSWAEFSRFFDKWCQQRLVVFSVKSSTRVARSPWANTPPLYRLIHVLKYSYVLLVCKDVRMPNKSTAWPPQPSCPAFITVKLSPLRDRLVVTECQLTHSHPACPREFAYHFRPGHLLANSCLPVRITNQISKQFVAPADVRRLLTHCKGPDHGVLDALQVLEGLFRTDPEAKVKLVFVEDQAMVETVFLLTSRTRALLRRFPRILLVDRLPGLQGTLDLMAVLCVDSAGRARQAACCVARPGTPSLLRFMLVSLLQSAPDVKGRVRCLTAGPEVAGQLRAVRQLLPCARVQICRAQGLETLFSKAQELGGASQEDPDLWPLLCRLADSKSYTAYSEALAELRSQAPTAFIRYFEHNWAPRHDMWVRFRAYEATRDLDACALVRSHRRRLLRRLSPSHSVAQCLRDLVAMQWADATGEAALRGC</sequence>
<proteinExistence type="evidence at transcript level"/>
<organism>
    <name type="scientific">Mus musculus</name>
    <name type="common">Mouse</name>
    <dbReference type="NCBI Taxonomy" id="10090"/>
    <lineage>
        <taxon>Eukaryota</taxon>
        <taxon>Metazoa</taxon>
        <taxon>Chordata</taxon>
        <taxon>Craniata</taxon>
        <taxon>Vertebrata</taxon>
        <taxon>Euteleostomi</taxon>
        <taxon>Mammalia</taxon>
        <taxon>Eutheria</taxon>
        <taxon>Euarchontoglires</taxon>
        <taxon>Glires</taxon>
        <taxon>Rodentia</taxon>
        <taxon>Myomorpha</taxon>
        <taxon>Muroidea</taxon>
        <taxon>Muridae</taxon>
        <taxon>Murinae</taxon>
        <taxon>Mus</taxon>
        <taxon>Mus</taxon>
    </lineage>
</organism>
<evidence type="ECO:0000303" key="1">
    <source>
    </source>
</evidence>
<evidence type="ECO:0000305" key="2"/>
<evidence type="ECO:0000312" key="3">
    <source>
        <dbReference type="MGI" id="MGI:2447816"/>
    </source>
</evidence>
<feature type="chain" id="PRO_0000322597" description="Uncharacterized protein ZSWIM9">
    <location>
        <begin position="1"/>
        <end position="447"/>
    </location>
</feature>
<feature type="splice variant" id="VSP_031965" description="In isoform 2." evidence="1">
    <location>
        <begin position="1"/>
        <end position="206"/>
    </location>
</feature>
<feature type="splice variant" id="VSP_031966" description="In isoform 3." evidence="1">
    <original>M</original>
    <variation>MVRPGGAAERQVERVSRGPRM</variation>
    <location>
        <position position="1"/>
    </location>
</feature>
<feature type="splice variant" id="VSP_031967" description="In isoform 3." evidence="1">
    <original>PPQPSCPAFITVKLSPLRDRLVVTE</original>
    <variation>CVSLSCDPTGGGEQGVSQTASNPQV</variation>
    <location>
        <begin position="93"/>
        <end position="117"/>
    </location>
</feature>
<feature type="splice variant" id="VSP_031968" description="In isoform 3." evidence="1">
    <location>
        <begin position="118"/>
        <end position="447"/>
    </location>
</feature>
<feature type="splice variant" id="VSP_031969" description="In isoform 4." evidence="1">
    <original>KLVF</original>
    <variation>GSHK</variation>
    <location>
        <begin position="198"/>
        <end position="201"/>
    </location>
</feature>
<feature type="splice variant" id="VSP_031970" description="In isoform 4." evidence="1">
    <location>
        <begin position="202"/>
        <end position="447"/>
    </location>
</feature>